<name>FOXD1_MOUSE</name>
<evidence type="ECO:0000250" key="1">
    <source>
        <dbReference type="UniProtKB" id="Q16676"/>
    </source>
</evidence>
<evidence type="ECO:0000255" key="2">
    <source>
        <dbReference type="PROSITE-ProRule" id="PRU00089"/>
    </source>
</evidence>
<evidence type="ECO:0000256" key="3">
    <source>
        <dbReference type="SAM" id="MobiDB-lite"/>
    </source>
</evidence>
<evidence type="ECO:0000269" key="4">
    <source>
    </source>
</evidence>
<evidence type="ECO:0000269" key="5">
    <source>
    </source>
</evidence>
<evidence type="ECO:0000269" key="6">
    <source>
    </source>
</evidence>
<evidence type="ECO:0000305" key="7"/>
<evidence type="ECO:0000305" key="8">
    <source>
    </source>
</evidence>
<feature type="chain" id="PRO_0000091812" description="Forkhead box protein D1">
    <location>
        <begin position="1"/>
        <end position="456"/>
    </location>
</feature>
<feature type="DNA-binding region" description="Fork-head" evidence="2">
    <location>
        <begin position="130"/>
        <end position="224"/>
    </location>
</feature>
<feature type="region of interest" description="Disordered" evidence="3">
    <location>
        <begin position="1"/>
        <end position="104"/>
    </location>
</feature>
<feature type="region of interest" description="Disordered" evidence="3">
    <location>
        <begin position="303"/>
        <end position="322"/>
    </location>
</feature>
<feature type="region of interest" description="Disordered" evidence="3">
    <location>
        <begin position="381"/>
        <end position="401"/>
    </location>
</feature>
<feature type="compositionally biased region" description="Acidic residues" evidence="3">
    <location>
        <begin position="15"/>
        <end position="38"/>
    </location>
</feature>
<feature type="compositionally biased region" description="Acidic residues" evidence="3">
    <location>
        <begin position="62"/>
        <end position="77"/>
    </location>
</feature>
<feature type="compositionally biased region" description="Pro residues" evidence="3">
    <location>
        <begin position="86"/>
        <end position="95"/>
    </location>
</feature>
<feature type="compositionally biased region" description="Pro residues" evidence="3">
    <location>
        <begin position="306"/>
        <end position="320"/>
    </location>
</feature>
<feature type="compositionally biased region" description="Low complexity" evidence="3">
    <location>
        <begin position="381"/>
        <end position="393"/>
    </location>
</feature>
<feature type="sequence conflict" description="In Ref. 1; AAC42042." evidence="7" ref="1">
    <original>P</original>
    <variation>R</variation>
    <location>
        <position position="355"/>
    </location>
</feature>
<sequence length="456" mass="45371">MTLSTEMSDASGLAEETDIDVVGEGEDDEEEEDDDDEGGGGRGGGGSRLPSSAQRRRRSYAGEDDLEDLEEEDDDDLLLASRPAASPAPPGPAPAPGTGSGGCSGAGAGGGAGGGTGAGTGGGAKNPLVKPPYSYIALITMAILQSPKKRLTLSEICEFISSRFPYYREKFPAWQNSIRHNLSLNDCFVKIPREPGNPGKGNYWTLDPESADMFDNGSFLRRRKRFKRQPLLAPHAAAEALLLRGAGPAAGAGDPGAALFPPPPPPPACGYGAYGCAYGLQLPPCAPPSALFAAAAAAAAAAFHPHSPPPPPPPPPPPPGAAAELARTAFGYRSHALAAALPGPLQAAAVKAGGPGAAALARSPFSIESLIGRTRGPAAAGAHVSSGAASGTAPGPGGGGCAVQAAAGPAVALTRSLVVAAAAAASSVSSSAALGTLHQGTALSSVENFTARISNC</sequence>
<reference key="1">
    <citation type="journal article" date="1994" name="J. Neurobiol.">
        <title>Expression of winged helix genes, BF-1 and BF-2, define adjacent domains within the developing forebrain and retina.</title>
        <authorList>
            <person name="Hatini V."/>
            <person name="Tao W."/>
            <person name="Lai E."/>
        </authorList>
    </citation>
    <scope>NUCLEOTIDE SEQUENCE [MRNA]</scope>
    <source>
        <strain>BALB/cJ</strain>
        <tissue>Embryo</tissue>
    </source>
</reference>
<reference key="2">
    <citation type="journal article" date="2005" name="Science">
        <title>The transcriptional landscape of the mammalian genome.</title>
        <authorList>
            <person name="Carninci P."/>
            <person name="Kasukawa T."/>
            <person name="Katayama S."/>
            <person name="Gough J."/>
            <person name="Frith M.C."/>
            <person name="Maeda N."/>
            <person name="Oyama R."/>
            <person name="Ravasi T."/>
            <person name="Lenhard B."/>
            <person name="Wells C."/>
            <person name="Kodzius R."/>
            <person name="Shimokawa K."/>
            <person name="Bajic V.B."/>
            <person name="Brenner S.E."/>
            <person name="Batalov S."/>
            <person name="Forrest A.R."/>
            <person name="Zavolan M."/>
            <person name="Davis M.J."/>
            <person name="Wilming L.G."/>
            <person name="Aidinis V."/>
            <person name="Allen J.E."/>
            <person name="Ambesi-Impiombato A."/>
            <person name="Apweiler R."/>
            <person name="Aturaliya R.N."/>
            <person name="Bailey T.L."/>
            <person name="Bansal M."/>
            <person name="Baxter L."/>
            <person name="Beisel K.W."/>
            <person name="Bersano T."/>
            <person name="Bono H."/>
            <person name="Chalk A.M."/>
            <person name="Chiu K.P."/>
            <person name="Choudhary V."/>
            <person name="Christoffels A."/>
            <person name="Clutterbuck D.R."/>
            <person name="Crowe M.L."/>
            <person name="Dalla E."/>
            <person name="Dalrymple B.P."/>
            <person name="de Bono B."/>
            <person name="Della Gatta G."/>
            <person name="di Bernardo D."/>
            <person name="Down T."/>
            <person name="Engstrom P."/>
            <person name="Fagiolini M."/>
            <person name="Faulkner G."/>
            <person name="Fletcher C.F."/>
            <person name="Fukushima T."/>
            <person name="Furuno M."/>
            <person name="Futaki S."/>
            <person name="Gariboldi M."/>
            <person name="Georgii-Hemming P."/>
            <person name="Gingeras T.R."/>
            <person name="Gojobori T."/>
            <person name="Green R.E."/>
            <person name="Gustincich S."/>
            <person name="Harbers M."/>
            <person name="Hayashi Y."/>
            <person name="Hensch T.K."/>
            <person name="Hirokawa N."/>
            <person name="Hill D."/>
            <person name="Huminiecki L."/>
            <person name="Iacono M."/>
            <person name="Ikeo K."/>
            <person name="Iwama A."/>
            <person name="Ishikawa T."/>
            <person name="Jakt M."/>
            <person name="Kanapin A."/>
            <person name="Katoh M."/>
            <person name="Kawasawa Y."/>
            <person name="Kelso J."/>
            <person name="Kitamura H."/>
            <person name="Kitano H."/>
            <person name="Kollias G."/>
            <person name="Krishnan S.P."/>
            <person name="Kruger A."/>
            <person name="Kummerfeld S.K."/>
            <person name="Kurochkin I.V."/>
            <person name="Lareau L.F."/>
            <person name="Lazarevic D."/>
            <person name="Lipovich L."/>
            <person name="Liu J."/>
            <person name="Liuni S."/>
            <person name="McWilliam S."/>
            <person name="Madan Babu M."/>
            <person name="Madera M."/>
            <person name="Marchionni L."/>
            <person name="Matsuda H."/>
            <person name="Matsuzawa S."/>
            <person name="Miki H."/>
            <person name="Mignone F."/>
            <person name="Miyake S."/>
            <person name="Morris K."/>
            <person name="Mottagui-Tabar S."/>
            <person name="Mulder N."/>
            <person name="Nakano N."/>
            <person name="Nakauchi H."/>
            <person name="Ng P."/>
            <person name="Nilsson R."/>
            <person name="Nishiguchi S."/>
            <person name="Nishikawa S."/>
            <person name="Nori F."/>
            <person name="Ohara O."/>
            <person name="Okazaki Y."/>
            <person name="Orlando V."/>
            <person name="Pang K.C."/>
            <person name="Pavan W.J."/>
            <person name="Pavesi G."/>
            <person name="Pesole G."/>
            <person name="Petrovsky N."/>
            <person name="Piazza S."/>
            <person name="Reed J."/>
            <person name="Reid J.F."/>
            <person name="Ring B.Z."/>
            <person name="Ringwald M."/>
            <person name="Rost B."/>
            <person name="Ruan Y."/>
            <person name="Salzberg S.L."/>
            <person name="Sandelin A."/>
            <person name="Schneider C."/>
            <person name="Schoenbach C."/>
            <person name="Sekiguchi K."/>
            <person name="Semple C.A."/>
            <person name="Seno S."/>
            <person name="Sessa L."/>
            <person name="Sheng Y."/>
            <person name="Shibata Y."/>
            <person name="Shimada H."/>
            <person name="Shimada K."/>
            <person name="Silva D."/>
            <person name="Sinclair B."/>
            <person name="Sperling S."/>
            <person name="Stupka E."/>
            <person name="Sugiura K."/>
            <person name="Sultana R."/>
            <person name="Takenaka Y."/>
            <person name="Taki K."/>
            <person name="Tammoja K."/>
            <person name="Tan S.L."/>
            <person name="Tang S."/>
            <person name="Taylor M.S."/>
            <person name="Tegner J."/>
            <person name="Teichmann S.A."/>
            <person name="Ueda H.R."/>
            <person name="van Nimwegen E."/>
            <person name="Verardo R."/>
            <person name="Wei C.L."/>
            <person name="Yagi K."/>
            <person name="Yamanishi H."/>
            <person name="Zabarovsky E."/>
            <person name="Zhu S."/>
            <person name="Zimmer A."/>
            <person name="Hide W."/>
            <person name="Bult C."/>
            <person name="Grimmond S.M."/>
            <person name="Teasdale R.D."/>
            <person name="Liu E.T."/>
            <person name="Brusic V."/>
            <person name="Quackenbush J."/>
            <person name="Wahlestedt C."/>
            <person name="Mattick J.S."/>
            <person name="Hume D.A."/>
            <person name="Kai C."/>
            <person name="Sasaki D."/>
            <person name="Tomaru Y."/>
            <person name="Fukuda S."/>
            <person name="Kanamori-Katayama M."/>
            <person name="Suzuki M."/>
            <person name="Aoki J."/>
            <person name="Arakawa T."/>
            <person name="Iida J."/>
            <person name="Imamura K."/>
            <person name="Itoh M."/>
            <person name="Kato T."/>
            <person name="Kawaji H."/>
            <person name="Kawagashira N."/>
            <person name="Kawashima T."/>
            <person name="Kojima M."/>
            <person name="Kondo S."/>
            <person name="Konno H."/>
            <person name="Nakano K."/>
            <person name="Ninomiya N."/>
            <person name="Nishio T."/>
            <person name="Okada M."/>
            <person name="Plessy C."/>
            <person name="Shibata K."/>
            <person name="Shiraki T."/>
            <person name="Suzuki S."/>
            <person name="Tagami M."/>
            <person name="Waki K."/>
            <person name="Watahiki A."/>
            <person name="Okamura-Oho Y."/>
            <person name="Suzuki H."/>
            <person name="Kawai J."/>
            <person name="Hayashizaki Y."/>
        </authorList>
    </citation>
    <scope>NUCLEOTIDE SEQUENCE [LARGE SCALE MRNA]</scope>
    <source>
        <strain>C57BL/6J</strain>
        <tissue>Eye</tissue>
        <tissue>Head</tissue>
    </source>
</reference>
<reference key="3">
    <citation type="journal article" date="1998" name="Development">
        <title>XBF-2 is a transcriptional repressor that converts ectoderm into neural tissue.</title>
        <authorList>
            <person name="Mariani F.V."/>
            <person name="Harland R.M."/>
        </authorList>
    </citation>
    <scope>FUNCTION</scope>
</reference>
<reference key="4">
    <citation type="journal article" date="2004" name="Development">
        <title>Foxd1 is required for proper formation of the optic chiasm.</title>
        <authorList>
            <person name="Herrera E."/>
            <person name="Marcus R."/>
            <person name="Li S."/>
            <person name="Williams S.E."/>
            <person name="Erskine L."/>
            <person name="Lai E."/>
            <person name="Mason C."/>
        </authorList>
    </citation>
    <scope>FUNCTION</scope>
    <scope>DISRUPTION PHENOTYPE</scope>
</reference>
<reference key="5">
    <citation type="journal article" date="2005" name="Development">
        <title>Foxd1-dependent signals control cellularity in the renal capsule, a structure required for normal renal development.</title>
        <authorList>
            <person name="Levinson R.S."/>
            <person name="Batourina E."/>
            <person name="Choi C."/>
            <person name="Vorontchikhina M."/>
            <person name="Kitajewski J."/>
            <person name="Mendelsohn C.L."/>
        </authorList>
    </citation>
    <scope>FUNCTION</scope>
</reference>
<keyword id="KW-0217">Developmental protein</keyword>
<keyword id="KW-0238">DNA-binding</keyword>
<keyword id="KW-0539">Nucleus</keyword>
<keyword id="KW-1185">Reference proteome</keyword>
<keyword id="KW-0804">Transcription</keyword>
<keyword id="KW-0805">Transcription regulation</keyword>
<dbReference type="EMBL" id="L38607">
    <property type="protein sequence ID" value="AAC42042.1"/>
    <property type="molecule type" value="mRNA"/>
</dbReference>
<dbReference type="EMBL" id="AK132390">
    <property type="protein sequence ID" value="BAE21140.1"/>
    <property type="molecule type" value="mRNA"/>
</dbReference>
<dbReference type="EMBL" id="AK142034">
    <property type="protein sequence ID" value="BAE24920.1"/>
    <property type="molecule type" value="mRNA"/>
</dbReference>
<dbReference type="CCDS" id="CCDS36759.1"/>
<dbReference type="RefSeq" id="NP_032268.2">
    <property type="nucleotide sequence ID" value="NM_008242.2"/>
</dbReference>
<dbReference type="SMR" id="Q61345"/>
<dbReference type="FunCoup" id="Q61345">
    <property type="interactions" value="5"/>
</dbReference>
<dbReference type="STRING" id="10090.ENSMUSP00000100725"/>
<dbReference type="PhosphoSitePlus" id="Q61345"/>
<dbReference type="PaxDb" id="10090-ENSMUSP00000100725"/>
<dbReference type="ProteomicsDB" id="267398"/>
<dbReference type="Antibodypedia" id="62630">
    <property type="antibodies" value="206 antibodies from 22 providers"/>
</dbReference>
<dbReference type="DNASU" id="15229"/>
<dbReference type="Ensembl" id="ENSMUST00000105098.6">
    <property type="protein sequence ID" value="ENSMUSP00000100725.4"/>
    <property type="gene ID" value="ENSMUSG00000078302.6"/>
</dbReference>
<dbReference type="GeneID" id="15229"/>
<dbReference type="KEGG" id="mmu:15229"/>
<dbReference type="UCSC" id="uc009van.1">
    <property type="organism name" value="mouse"/>
</dbReference>
<dbReference type="AGR" id="MGI:1347463"/>
<dbReference type="CTD" id="2297"/>
<dbReference type="MGI" id="MGI:1347463">
    <property type="gene designation" value="Foxd1"/>
</dbReference>
<dbReference type="VEuPathDB" id="HostDB:ENSMUSG00000078302"/>
<dbReference type="eggNOG" id="KOG2294">
    <property type="taxonomic scope" value="Eukaryota"/>
</dbReference>
<dbReference type="GeneTree" id="ENSGT00940000161645"/>
<dbReference type="HOGENOM" id="CLU_040357_5_1_1"/>
<dbReference type="InParanoid" id="Q61345"/>
<dbReference type="OMA" id="REHNGFL"/>
<dbReference type="OrthoDB" id="5402974at2759"/>
<dbReference type="TreeFam" id="TF316127"/>
<dbReference type="BioGRID-ORCS" id="15229">
    <property type="hits" value="2 hits in 78 CRISPR screens"/>
</dbReference>
<dbReference type="PRO" id="PR:Q61345"/>
<dbReference type="Proteomes" id="UP000000589">
    <property type="component" value="Chromosome 13"/>
</dbReference>
<dbReference type="RNAct" id="Q61345">
    <property type="molecule type" value="protein"/>
</dbReference>
<dbReference type="Bgee" id="ENSMUSG00000078302">
    <property type="expression patterns" value="Expressed in external carotid artery and 140 other cell types or tissues"/>
</dbReference>
<dbReference type="GO" id="GO:0005634">
    <property type="term" value="C:nucleus"/>
    <property type="evidence" value="ECO:0007669"/>
    <property type="project" value="UniProtKB-SubCell"/>
</dbReference>
<dbReference type="GO" id="GO:0003677">
    <property type="term" value="F:DNA binding"/>
    <property type="evidence" value="ECO:0000314"/>
    <property type="project" value="MGI"/>
</dbReference>
<dbReference type="GO" id="GO:0008301">
    <property type="term" value="F:DNA binding, bending"/>
    <property type="evidence" value="ECO:0000266"/>
    <property type="project" value="MGI"/>
</dbReference>
<dbReference type="GO" id="GO:0001228">
    <property type="term" value="F:DNA-binding transcription activator activity, RNA polymerase II-specific"/>
    <property type="evidence" value="ECO:0000314"/>
    <property type="project" value="NTNU_SB"/>
</dbReference>
<dbReference type="GO" id="GO:0000978">
    <property type="term" value="F:RNA polymerase II cis-regulatory region sequence-specific DNA binding"/>
    <property type="evidence" value="ECO:0000314"/>
    <property type="project" value="NTNU_SB"/>
</dbReference>
<dbReference type="GO" id="GO:0043565">
    <property type="term" value="F:sequence-specific DNA binding"/>
    <property type="evidence" value="ECO:0000314"/>
    <property type="project" value="MGI"/>
</dbReference>
<dbReference type="GO" id="GO:0007411">
    <property type="term" value="P:axon guidance"/>
    <property type="evidence" value="ECO:0000315"/>
    <property type="project" value="MGI"/>
</dbReference>
<dbReference type="GO" id="GO:0001658">
    <property type="term" value="P:branching involved in ureteric bud morphogenesis"/>
    <property type="evidence" value="ECO:0000314"/>
    <property type="project" value="MGI"/>
</dbReference>
<dbReference type="GO" id="GO:0060070">
    <property type="term" value="P:canonical Wnt signaling pathway"/>
    <property type="evidence" value="ECO:0000315"/>
    <property type="project" value="MGI"/>
</dbReference>
<dbReference type="GO" id="GO:0060678">
    <property type="term" value="P:dichotomous subdivision of terminal units involved in ureteric bud branching"/>
    <property type="evidence" value="ECO:0000315"/>
    <property type="project" value="UniProtKB"/>
</dbReference>
<dbReference type="GO" id="GO:0001822">
    <property type="term" value="P:kidney development"/>
    <property type="evidence" value="ECO:0000315"/>
    <property type="project" value="MGI"/>
</dbReference>
<dbReference type="GO" id="GO:0032275">
    <property type="term" value="P:luteinizing hormone secretion"/>
    <property type="evidence" value="ECO:0000315"/>
    <property type="project" value="CACAO"/>
</dbReference>
<dbReference type="GO" id="GO:0072213">
    <property type="term" value="P:metanephric capsule development"/>
    <property type="evidence" value="ECO:0000315"/>
    <property type="project" value="UniProtKB"/>
</dbReference>
<dbReference type="GO" id="GO:0072267">
    <property type="term" value="P:metanephric capsule specification"/>
    <property type="evidence" value="ECO:0000315"/>
    <property type="project" value="UniProtKB"/>
</dbReference>
<dbReference type="GO" id="GO:0072210">
    <property type="term" value="P:metanephric nephron development"/>
    <property type="evidence" value="ECO:0000315"/>
    <property type="project" value="UniProtKB"/>
</dbReference>
<dbReference type="GO" id="GO:0045892">
    <property type="term" value="P:negative regulation of DNA-templated transcription"/>
    <property type="evidence" value="ECO:0000315"/>
    <property type="project" value="UniProtKB"/>
</dbReference>
<dbReference type="GO" id="GO:0072076">
    <property type="term" value="P:nephrogenic mesenchyme development"/>
    <property type="evidence" value="ECO:0000315"/>
    <property type="project" value="UniProtKB"/>
</dbReference>
<dbReference type="GO" id="GO:0072268">
    <property type="term" value="P:pattern specification involved in metanephros development"/>
    <property type="evidence" value="ECO:0000315"/>
    <property type="project" value="UniProtKB"/>
</dbReference>
<dbReference type="GO" id="GO:0030513">
    <property type="term" value="P:positive regulation of BMP signaling pathway"/>
    <property type="evidence" value="ECO:0000315"/>
    <property type="project" value="UniProtKB"/>
</dbReference>
<dbReference type="GO" id="GO:0010628">
    <property type="term" value="P:positive regulation of gene expression"/>
    <property type="evidence" value="ECO:0000315"/>
    <property type="project" value="UniProtKB"/>
</dbReference>
<dbReference type="GO" id="GO:0090184">
    <property type="term" value="P:positive regulation of kidney development"/>
    <property type="evidence" value="ECO:0000315"/>
    <property type="project" value="UniProtKB"/>
</dbReference>
<dbReference type="GO" id="GO:0045944">
    <property type="term" value="P:positive regulation of transcription by RNA polymerase II"/>
    <property type="evidence" value="ECO:0000314"/>
    <property type="project" value="NTNU_SB"/>
</dbReference>
<dbReference type="CDD" id="cd20046">
    <property type="entry name" value="FH_FOXD1_D2-like"/>
    <property type="match status" value="1"/>
</dbReference>
<dbReference type="FunFam" id="1.10.10.10:FF:000016">
    <property type="entry name" value="Forkhead box protein I1"/>
    <property type="match status" value="1"/>
</dbReference>
<dbReference type="Gene3D" id="1.10.10.10">
    <property type="entry name" value="Winged helix-like DNA-binding domain superfamily/Winged helix DNA-binding domain"/>
    <property type="match status" value="1"/>
</dbReference>
<dbReference type="InterPro" id="IPR001766">
    <property type="entry name" value="Fork_head_dom"/>
</dbReference>
<dbReference type="InterPro" id="IPR050211">
    <property type="entry name" value="FOX_domain-containing"/>
</dbReference>
<dbReference type="InterPro" id="IPR018122">
    <property type="entry name" value="TF_fork_head_CS_1"/>
</dbReference>
<dbReference type="InterPro" id="IPR030456">
    <property type="entry name" value="TF_fork_head_CS_2"/>
</dbReference>
<dbReference type="InterPro" id="IPR036388">
    <property type="entry name" value="WH-like_DNA-bd_sf"/>
</dbReference>
<dbReference type="InterPro" id="IPR036390">
    <property type="entry name" value="WH_DNA-bd_sf"/>
</dbReference>
<dbReference type="PANTHER" id="PTHR11829">
    <property type="entry name" value="FORKHEAD BOX PROTEIN"/>
    <property type="match status" value="1"/>
</dbReference>
<dbReference type="PANTHER" id="PTHR11829:SF348">
    <property type="entry name" value="FORKHEAD BOX PROTEIN D1"/>
    <property type="match status" value="1"/>
</dbReference>
<dbReference type="Pfam" id="PF00250">
    <property type="entry name" value="Forkhead"/>
    <property type="match status" value="1"/>
</dbReference>
<dbReference type="PRINTS" id="PR00053">
    <property type="entry name" value="FORKHEAD"/>
</dbReference>
<dbReference type="SMART" id="SM00339">
    <property type="entry name" value="FH"/>
    <property type="match status" value="1"/>
</dbReference>
<dbReference type="SUPFAM" id="SSF46785">
    <property type="entry name" value="Winged helix' DNA-binding domain"/>
    <property type="match status" value="1"/>
</dbReference>
<dbReference type="PROSITE" id="PS00657">
    <property type="entry name" value="FORK_HEAD_1"/>
    <property type="match status" value="1"/>
</dbReference>
<dbReference type="PROSITE" id="PS00658">
    <property type="entry name" value="FORK_HEAD_2"/>
    <property type="match status" value="1"/>
</dbReference>
<dbReference type="PROSITE" id="PS50039">
    <property type="entry name" value="FORK_HEAD_3"/>
    <property type="match status" value="1"/>
</dbReference>
<protein>
    <recommendedName>
        <fullName>Forkhead box protein D1</fullName>
    </recommendedName>
    <alternativeName>
        <fullName>Brain factor 2</fullName>
        <shortName>BF-2</shortName>
    </alternativeName>
    <alternativeName>
        <fullName>Forkhead-related protein FKHL8</fullName>
    </alternativeName>
    <alternativeName>
        <fullName>Forkhead-related transcription factor 4</fullName>
        <shortName>FREAC-4</shortName>
    </alternativeName>
    <alternativeName>
        <fullName>HFH-BF-2</fullName>
    </alternativeName>
</protein>
<organism>
    <name type="scientific">Mus musculus</name>
    <name type="common">Mouse</name>
    <dbReference type="NCBI Taxonomy" id="10090"/>
    <lineage>
        <taxon>Eukaryota</taxon>
        <taxon>Metazoa</taxon>
        <taxon>Chordata</taxon>
        <taxon>Craniata</taxon>
        <taxon>Vertebrata</taxon>
        <taxon>Euteleostomi</taxon>
        <taxon>Mammalia</taxon>
        <taxon>Eutheria</taxon>
        <taxon>Euarchontoglires</taxon>
        <taxon>Glires</taxon>
        <taxon>Rodentia</taxon>
        <taxon>Myomorpha</taxon>
        <taxon>Muroidea</taxon>
        <taxon>Muridae</taxon>
        <taxon>Murinae</taxon>
        <taxon>Mus</taxon>
        <taxon>Mus</taxon>
    </lineage>
</organism>
<proteinExistence type="evidence at transcript level"/>
<accession>Q61345</accession>
<accession>Q3UQW8</accession>
<gene>
    <name type="primary">Foxd1</name>
    <name type="synonym">Fkhl8</name>
    <name type="synonym">Freac4</name>
    <name type="synonym">Hfhbf2</name>
</gene>
<comment type="function">
    <text evidence="1 4 5 6">Transcription factor involved in regulation of gene expression in a variety of processes including formation of positional identity in the developing retina, regionalization of the optic chiasm, morphogenesis of the kidney, and neuralization of ectodermal cells (PubMed:15509772, PubMed:15634693, PubMed:9811586). Involved in transcriptional activation of PGF and C3 genes (By similarity).</text>
</comment>
<comment type="subcellular location">
    <subcellularLocation>
        <location evidence="2">Nucleus</location>
    </subcellularLocation>
</comment>
<comment type="tissue specificity">
    <text>Predominantly expressed in the CNS and temporal half of the retina. Also expressed in the condensed head mesenchyme, metanephric blastema of the developing kidney, cortex of the adrenal gland, condensed mesenchyme at the base of the follicles of vibrassae and cartilage perichondrium of the developing vertebrate.</text>
</comment>
<comment type="developmental stage">
    <text>At 9.5 dpc embryos, expressed in a limited region of the neuroepithelium and also in the temporal half of the primary optic cup and the optic stalk. At 10.5 dpc, seen in the hypothalamus, temporal half of the optic stalk, and temporal hemiretina. At 12.5 dpc and 13.5 dpc a high expression is seen in regions of condensed mesenchyme of the head, and as neuroepithelial cells begin to differentiate and migrate outward from the ventricular zone, expression declines markedly. By 16.5 dpc levels are diminished and restricted to unfused pockets along the exhausted ventricular zone.</text>
</comment>
<comment type="disruption phenotype">
    <text evidence="4">Mice show disrupted cell identity in the ventrotemporal area of the retina and aberrant morphogenesis of the optic chiasm. Their kidneys remain fused, have a disorganised ureteric tree and fail to ascend to a lumbar position.</text>
</comment>
<comment type="caution">
    <text evidence="8">Was originally assigned to be BF-2 (FOXG1).</text>
</comment>